<dbReference type="EMBL" id="BC134481">
    <property type="protein sequence ID" value="AAI34482.1"/>
    <property type="molecule type" value="mRNA"/>
</dbReference>
<dbReference type="RefSeq" id="NP_001074198.1">
    <property type="nucleotide sequence ID" value="NM_001080729.1"/>
</dbReference>
<dbReference type="RefSeq" id="XP_005222002.1">
    <property type="nucleotide sequence ID" value="XM_005221945.5"/>
</dbReference>
<dbReference type="SMR" id="A4IFA6"/>
<dbReference type="FunCoup" id="A4IFA6">
    <property type="interactions" value="193"/>
</dbReference>
<dbReference type="STRING" id="9913.ENSBTAP00000007913"/>
<dbReference type="GlyCosmos" id="A4IFA6">
    <property type="glycosylation" value="2 sites, No reported glycans"/>
</dbReference>
<dbReference type="GlyGen" id="A4IFA6">
    <property type="glycosylation" value="2 sites"/>
</dbReference>
<dbReference type="PaxDb" id="9913-ENSBTAP00000007913"/>
<dbReference type="Ensembl" id="ENSBTAT00000007913.6">
    <property type="protein sequence ID" value="ENSBTAP00000007913.4"/>
    <property type="gene ID" value="ENSBTAG00000006024.6"/>
</dbReference>
<dbReference type="Ensembl" id="ENSBTAT00000133654.1">
    <property type="protein sequence ID" value="ENSBTAP00000086514.1"/>
    <property type="gene ID" value="ENSBTAG00000006024.6"/>
</dbReference>
<dbReference type="GeneID" id="515018"/>
<dbReference type="KEGG" id="bta:515018"/>
<dbReference type="CTD" id="3671"/>
<dbReference type="VEuPathDB" id="HostDB:ENSBTAG00000006024"/>
<dbReference type="VGNC" id="VGNC:30298">
    <property type="gene designation" value="ISLR"/>
</dbReference>
<dbReference type="eggNOG" id="KOG0619">
    <property type="taxonomic scope" value="Eukaryota"/>
</dbReference>
<dbReference type="GeneTree" id="ENSGT00940000160967"/>
<dbReference type="HOGENOM" id="CLU_658828_0_0_1"/>
<dbReference type="InParanoid" id="A4IFA6"/>
<dbReference type="OMA" id="AHNEIRV"/>
<dbReference type="OrthoDB" id="2151624at2759"/>
<dbReference type="TreeFam" id="TF351112"/>
<dbReference type="Reactome" id="R-BTA-114608">
    <property type="pathway name" value="Platelet degranulation"/>
</dbReference>
<dbReference type="Proteomes" id="UP000009136">
    <property type="component" value="Chromosome 21"/>
</dbReference>
<dbReference type="Bgee" id="ENSBTAG00000006024">
    <property type="expression patterns" value="Expressed in fornix of vagina and 99 other cell types or tissues"/>
</dbReference>
<dbReference type="GO" id="GO:0005576">
    <property type="term" value="C:extracellular region"/>
    <property type="evidence" value="ECO:0007669"/>
    <property type="project" value="UniProtKB-SubCell"/>
</dbReference>
<dbReference type="FunFam" id="2.60.40.10:FF:001692">
    <property type="entry name" value="Immunoglobulin superfamily containing leucine-rich repeat protein"/>
    <property type="match status" value="1"/>
</dbReference>
<dbReference type="FunFam" id="3.80.10.10:FF:000058">
    <property type="entry name" value="immunoglobulin superfamily containing leucine-rich repeat protein 2"/>
    <property type="match status" value="1"/>
</dbReference>
<dbReference type="Gene3D" id="2.60.40.10">
    <property type="entry name" value="Immunoglobulins"/>
    <property type="match status" value="1"/>
</dbReference>
<dbReference type="Gene3D" id="3.80.10.10">
    <property type="entry name" value="Ribonuclease Inhibitor"/>
    <property type="match status" value="1"/>
</dbReference>
<dbReference type="InterPro" id="IPR000483">
    <property type="entry name" value="Cys-rich_flank_reg_C"/>
</dbReference>
<dbReference type="InterPro" id="IPR007110">
    <property type="entry name" value="Ig-like_dom"/>
</dbReference>
<dbReference type="InterPro" id="IPR036179">
    <property type="entry name" value="Ig-like_dom_sf"/>
</dbReference>
<dbReference type="InterPro" id="IPR013783">
    <property type="entry name" value="Ig-like_fold"/>
</dbReference>
<dbReference type="InterPro" id="IPR013098">
    <property type="entry name" value="Ig_I-set"/>
</dbReference>
<dbReference type="InterPro" id="IPR003598">
    <property type="entry name" value="Ig_sub2"/>
</dbReference>
<dbReference type="InterPro" id="IPR001611">
    <property type="entry name" value="Leu-rich_rpt"/>
</dbReference>
<dbReference type="InterPro" id="IPR003591">
    <property type="entry name" value="Leu-rich_rpt_typical-subtyp"/>
</dbReference>
<dbReference type="InterPro" id="IPR050467">
    <property type="entry name" value="LRFN"/>
</dbReference>
<dbReference type="InterPro" id="IPR032675">
    <property type="entry name" value="LRR_dom_sf"/>
</dbReference>
<dbReference type="PANTHER" id="PTHR45842:SF12">
    <property type="entry name" value="KEKKON 5, ISOFORM A"/>
    <property type="match status" value="1"/>
</dbReference>
<dbReference type="PANTHER" id="PTHR45842">
    <property type="entry name" value="SYNAPTIC ADHESION-LIKE MOLECULE SALM"/>
    <property type="match status" value="1"/>
</dbReference>
<dbReference type="Pfam" id="PF07679">
    <property type="entry name" value="I-set"/>
    <property type="match status" value="1"/>
</dbReference>
<dbReference type="Pfam" id="PF13855">
    <property type="entry name" value="LRR_8"/>
    <property type="match status" value="2"/>
</dbReference>
<dbReference type="SMART" id="SM00408">
    <property type="entry name" value="IGc2"/>
    <property type="match status" value="1"/>
</dbReference>
<dbReference type="SMART" id="SM00369">
    <property type="entry name" value="LRR_TYP"/>
    <property type="match status" value="5"/>
</dbReference>
<dbReference type="SMART" id="SM00082">
    <property type="entry name" value="LRRCT"/>
    <property type="match status" value="1"/>
</dbReference>
<dbReference type="SUPFAM" id="SSF48726">
    <property type="entry name" value="Immunoglobulin"/>
    <property type="match status" value="1"/>
</dbReference>
<dbReference type="SUPFAM" id="SSF52058">
    <property type="entry name" value="L domain-like"/>
    <property type="match status" value="1"/>
</dbReference>
<dbReference type="PROSITE" id="PS50835">
    <property type="entry name" value="IG_LIKE"/>
    <property type="match status" value="1"/>
</dbReference>
<dbReference type="PROSITE" id="PS51450">
    <property type="entry name" value="LRR"/>
    <property type="match status" value="5"/>
</dbReference>
<sequence length="428" mass="45772">MQELRLLCLVVLVGLAQACPEPCECGEKYGFHIADCAYRDLQAVPSGFPANVTTLSLSANQLPSLPGGAFREVPRLQSLWLAHNEIRSVAAGALASLSQLKSLDLSHNLISDFAWSDLHSLSALQLLKMDSNELTFIPRDAFRSLRALRSLQLNHNRLHTLAEGTFAPLTALSHLQINDNPFDCTCGIVWFKTWALTTAVSIPEQDNITCTSPHVLKGTRLNRLLPLPCSAPSVQLTYQPSQDGAELRPGFVLALHCDVDGQPAPQLHWHIQTPGGTVEITSPNVGADGRALPGVLAASSRPRFQAFANGSLLIPDFGKLEEGTYSCLATNELGSAESSVNVALATPGEGGEDALGRRFQGKAAEGKVCYTVDNEVQPSGPEDNVVIIYLSRARGPEAAATAEGVPGKQPPGLLLLGQSLLFLFLASF</sequence>
<protein>
    <recommendedName>
        <fullName>Immunoglobulin superfamily containing leucine-rich repeat protein</fullName>
    </recommendedName>
</protein>
<organism>
    <name type="scientific">Bos taurus</name>
    <name type="common">Bovine</name>
    <dbReference type="NCBI Taxonomy" id="9913"/>
    <lineage>
        <taxon>Eukaryota</taxon>
        <taxon>Metazoa</taxon>
        <taxon>Chordata</taxon>
        <taxon>Craniata</taxon>
        <taxon>Vertebrata</taxon>
        <taxon>Euteleostomi</taxon>
        <taxon>Mammalia</taxon>
        <taxon>Eutheria</taxon>
        <taxon>Laurasiatheria</taxon>
        <taxon>Artiodactyla</taxon>
        <taxon>Ruminantia</taxon>
        <taxon>Pecora</taxon>
        <taxon>Bovidae</taxon>
        <taxon>Bovinae</taxon>
        <taxon>Bos</taxon>
    </lineage>
</organism>
<comment type="subcellular location">
    <subcellularLocation>
        <location evidence="3">Secreted</location>
    </subcellularLocation>
</comment>
<feature type="signal peptide" evidence="1">
    <location>
        <begin position="1"/>
        <end position="18"/>
    </location>
</feature>
<feature type="chain" id="PRO_0000312207" description="Immunoglobulin superfamily containing leucine-rich repeat protein">
    <location>
        <begin position="19"/>
        <end position="428"/>
    </location>
</feature>
<feature type="domain" description="LRRNT">
    <location>
        <begin position="19"/>
        <end position="50"/>
    </location>
</feature>
<feature type="repeat" description="LRR 1">
    <location>
        <begin position="51"/>
        <end position="72"/>
    </location>
</feature>
<feature type="repeat" description="LRR 2">
    <location>
        <begin position="75"/>
        <end position="96"/>
    </location>
</feature>
<feature type="repeat" description="LRR 3">
    <location>
        <begin position="99"/>
        <end position="122"/>
    </location>
</feature>
<feature type="repeat" description="LRR 4">
    <location>
        <begin position="123"/>
        <end position="144"/>
    </location>
</feature>
<feature type="repeat" description="LRR 5">
    <location>
        <begin position="147"/>
        <end position="168"/>
    </location>
</feature>
<feature type="domain" description="LRRCT">
    <location>
        <begin position="180"/>
        <end position="231"/>
    </location>
</feature>
<feature type="domain" description="Ig-like">
    <location>
        <begin position="232"/>
        <end position="343"/>
    </location>
</feature>
<feature type="glycosylation site" description="N-linked (GlcNAc...) asparagine" evidence="1">
    <location>
        <position position="51"/>
    </location>
</feature>
<feature type="glycosylation site" description="N-linked (GlcNAc...) asparagine" evidence="1">
    <location>
        <position position="309"/>
    </location>
</feature>
<feature type="disulfide bond" evidence="2">
    <location>
        <begin position="257"/>
        <end position="327"/>
    </location>
</feature>
<gene>
    <name type="primary">ISLR</name>
</gene>
<reference key="1">
    <citation type="submission" date="2007-03" db="EMBL/GenBank/DDBJ databases">
        <authorList>
            <consortium name="NIH - Mammalian Gene Collection (MGC) project"/>
        </authorList>
    </citation>
    <scope>NUCLEOTIDE SEQUENCE [LARGE SCALE MRNA]</scope>
    <source>
        <strain>Hereford</strain>
        <tissue>Ascending colon</tissue>
    </source>
</reference>
<proteinExistence type="evidence at transcript level"/>
<name>ISLR_BOVIN</name>
<keyword id="KW-1015">Disulfide bond</keyword>
<keyword id="KW-0325">Glycoprotein</keyword>
<keyword id="KW-0393">Immunoglobulin domain</keyword>
<keyword id="KW-0433">Leucine-rich repeat</keyword>
<keyword id="KW-1185">Reference proteome</keyword>
<keyword id="KW-0677">Repeat</keyword>
<keyword id="KW-0964">Secreted</keyword>
<keyword id="KW-0732">Signal</keyword>
<accession>A4IFA6</accession>
<evidence type="ECO:0000255" key="1"/>
<evidence type="ECO:0000255" key="2">
    <source>
        <dbReference type="PROSITE-ProRule" id="PRU00114"/>
    </source>
</evidence>
<evidence type="ECO:0000305" key="3"/>